<organism>
    <name type="scientific">Mus musculus</name>
    <name type="common">Mouse</name>
    <dbReference type="NCBI Taxonomy" id="10090"/>
    <lineage>
        <taxon>Eukaryota</taxon>
        <taxon>Metazoa</taxon>
        <taxon>Chordata</taxon>
        <taxon>Craniata</taxon>
        <taxon>Vertebrata</taxon>
        <taxon>Euteleostomi</taxon>
        <taxon>Mammalia</taxon>
        <taxon>Eutheria</taxon>
        <taxon>Euarchontoglires</taxon>
        <taxon>Glires</taxon>
        <taxon>Rodentia</taxon>
        <taxon>Myomorpha</taxon>
        <taxon>Muroidea</taxon>
        <taxon>Muridae</taxon>
        <taxon>Murinae</taxon>
        <taxon>Mus</taxon>
        <taxon>Mus</taxon>
    </lineage>
</organism>
<reference key="1">
    <citation type="journal article" date="1994" name="Nature">
        <title>Role of SAPK/ERK kinase-1 in the stress-activated pathway regulating transcription factor c-Jun.</title>
        <authorList>
            <person name="Sanchez I."/>
            <person name="Hughes R.T."/>
            <person name="Mayer B.J."/>
            <person name="Yee K."/>
            <person name="Woodgett J.R."/>
            <person name="Avruch J."/>
            <person name="Kyriakis J.M."/>
            <person name="Zon L.I."/>
        </authorList>
    </citation>
    <scope>NUCLEOTIDE SEQUENCE [MRNA]</scope>
    <scope>FUNCTION</scope>
    <scope>MUTAGENESIS OF LYS-129</scope>
    <source>
        <tissue>Embryo</tissue>
    </source>
</reference>
<reference key="2">
    <citation type="submission" date="1996-12" db="EMBL/GenBank/DDBJ databases">
        <authorList>
            <person name="Zon L.I."/>
        </authorList>
    </citation>
    <scope>SEQUENCE REVISION</scope>
</reference>
<reference key="3">
    <citation type="journal article" date="1998" name="Immunity">
        <title>SEK1/MKK4 is required for maintenance of a normal peripheral lymphoid compartment but not for lymphocyte development.</title>
        <authorList>
            <person name="Swat W."/>
            <person name="Fujikawa K."/>
            <person name="Ganiatsas S."/>
            <person name="Yang D."/>
            <person name="Xavier R.J."/>
            <person name="Harris N.L."/>
            <person name="Davidson L."/>
            <person name="Ferrini R."/>
            <person name="Davis R.J."/>
            <person name="Labow M.A."/>
            <person name="Flavell R.A."/>
            <person name="Zon L.I."/>
            <person name="Alt F.W."/>
        </authorList>
    </citation>
    <scope>FUNCTION</scope>
</reference>
<reference key="4">
    <citation type="journal article" date="1999" name="Mol. Cell. Biol.">
        <title>The MKK7 gene encodes a group of c-Jun NH2-terminal kinase kinases.</title>
        <authorList>
            <person name="Tournier C."/>
            <person name="Whitmarsh A.J."/>
            <person name="Cavanagh J."/>
            <person name="Barrett T."/>
            <person name="Davis R.J."/>
        </authorList>
    </citation>
    <scope>ACTIVITY REGULATION</scope>
    <scope>SUBCELLULAR LOCATION</scope>
    <scope>FUNCTION OF THE MKK/JNK PATHWAY</scope>
</reference>
<reference key="5">
    <citation type="journal article" date="1999" name="Brain Res. Mol. Brain Res.">
        <title>Dynamic expression of SEK1 suggests multiple roles of the gene during embryogenesis and in adult brain of mice.</title>
        <authorList>
            <person name="Lee J.K."/>
            <person name="Hwang W.S."/>
            <person name="Lee Y.D."/>
            <person name="Han P.L."/>
        </authorList>
    </citation>
    <scope>TISSUE SPECIFICITY</scope>
</reference>
<reference key="6">
    <citation type="journal article" date="2001" name="Genes Dev.">
        <title>MKK7 is an essential component of the JNK signal transduction pathway activated by proinflammatory cytokines.</title>
        <authorList>
            <person name="Tournier C."/>
            <person name="Dong C."/>
            <person name="Turner T.K."/>
            <person name="Jones S.N."/>
            <person name="Flavell R.A."/>
            <person name="Davis R.J."/>
        </authorList>
    </citation>
    <scope>FUNCTION</scope>
</reference>
<reference key="7">
    <citation type="journal article" date="2003" name="Cell. Signal.">
        <title>A subdomain of MEKK1 that is critical for binding to MKK4.</title>
        <authorList>
            <person name="Tu Z."/>
            <person name="Mooney S.M."/>
            <person name="Lee F.S."/>
        </authorList>
    </citation>
    <scope>PHOSPHORYLATION</scope>
    <scope>INTERACTION WITH MAP3K1/MEKK1</scope>
</reference>
<reference key="8">
    <citation type="journal article" date="2003" name="J. Biol. Chem.">
        <title>Different properties of SEK1 and MKK7 in dual phosphorylation of stress-induced activated protein kinase SAPK/JNK in embryonic stem cells.</title>
        <authorList>
            <person name="Kishimoto H."/>
            <person name="Nakagawa K."/>
            <person name="Watanabe T."/>
            <person name="Kitagawa D."/>
            <person name="Momose H."/>
            <person name="Seo J."/>
            <person name="Nishitai G."/>
            <person name="Shimizu N."/>
            <person name="Ohata S."/>
            <person name="Tanemura S."/>
            <person name="Asaka S."/>
            <person name="Goto T."/>
            <person name="Fukushi H."/>
            <person name="Yoshida H."/>
            <person name="Suzuki A."/>
            <person name="Sasaki T."/>
            <person name="Wada T."/>
            <person name="Penninger J.M."/>
            <person name="Nishina H."/>
            <person name="Katada T."/>
        </authorList>
    </citation>
    <scope>FUNCTION</scope>
</reference>
<reference key="9">
    <citation type="journal article" date="2007" name="Mol. Cell. Biol.">
        <title>Targeted deletion of the mitogen-activated protein kinase kinase 4 gene in the nervous system causes severe brain developmental defects and premature death.</title>
        <authorList>
            <person name="Wang X."/>
            <person name="Nadarajah B."/>
            <person name="Robinson A.C."/>
            <person name="McColl B.W."/>
            <person name="Jin J.W."/>
            <person name="Dajas-Bailador F."/>
            <person name="Boot-Handford R.P."/>
            <person name="Tournier C."/>
        </authorList>
    </citation>
    <scope>DISRUPTION PHENOTYPE</scope>
</reference>
<reference key="10">
    <citation type="journal article" date="2009" name="Circ. Res.">
        <title>Cardiac-specific deletion of mkk4 reveals its role in pathological hypertrophic remodeling but not in physiological cardiac growth.</title>
        <authorList>
            <person name="Liu W."/>
            <person name="Zi M."/>
            <person name="Jin J."/>
            <person name="Prehar S."/>
            <person name="Oceandy D."/>
            <person name="Kimura T.E."/>
            <person name="Lei M."/>
            <person name="Neyses L."/>
            <person name="Weston A.H."/>
            <person name="Cartwright E.J."/>
            <person name="Wang X."/>
        </authorList>
    </citation>
    <scope>DISRUPTION PHENOTYPE</scope>
</reference>
<reference key="11">
    <citation type="journal article" date="2007" name="Oncogene">
        <title>Differential regulation and properties of MAPKs.</title>
        <authorList>
            <person name="Raman M."/>
            <person name="Chen W."/>
            <person name="Cobb M.H."/>
        </authorList>
    </citation>
    <scope>REVIEW ON ACTIVITY REGULATION</scope>
</reference>
<reference key="12">
    <citation type="journal article" date="2010" name="Cell">
        <title>A tissue-specific atlas of mouse protein phosphorylation and expression.</title>
        <authorList>
            <person name="Huttlin E.L."/>
            <person name="Jedrychowski M.P."/>
            <person name="Elias J.E."/>
            <person name="Goswami T."/>
            <person name="Rad R."/>
            <person name="Beausoleil S.A."/>
            <person name="Villen J."/>
            <person name="Haas W."/>
            <person name="Sowa M.E."/>
            <person name="Gygi S.P."/>
        </authorList>
    </citation>
    <scope>PHOSPHORYLATION [LARGE SCALE ANALYSIS] AT SER-88; SER-255 AND THR-259</scope>
    <scope>IDENTIFICATION BY MASS SPECTROMETRY [LARGE SCALE ANALYSIS]</scope>
    <source>
        <tissue>Brain</tissue>
        <tissue>Brown adipose tissue</tissue>
        <tissue>Heart</tissue>
        <tissue>Kidney</tissue>
        <tissue>Liver</tissue>
        <tissue>Lung</tissue>
        <tissue>Pancreas</tissue>
        <tissue>Spleen</tissue>
        <tissue>Testis</tissue>
    </source>
</reference>
<reference key="13">
    <citation type="journal article" date="2010" name="J. Biochem.">
        <title>Diverse physiological functions of MKK4 and MKK7 during early embryogenesis.</title>
        <authorList>
            <person name="Asaoka Y."/>
            <person name="Nishina H."/>
        </authorList>
    </citation>
    <scope>REVIEW ON FUNCTION</scope>
</reference>
<reference key="14">
    <citation type="journal article" date="2011" name="Eur. J. Cell Biol.">
        <title>The bottleneck of JNK signaling: molecular and functional characteristics of MKK4 and MKK7.</title>
        <authorList>
            <person name="Haeusgen W."/>
            <person name="Herdegen T."/>
            <person name="Waetzig V."/>
        </authorList>
    </citation>
    <scope>REVIEW ON REGULATION</scope>
    <scope>REVIEW ON FUNCTION</scope>
</reference>
<reference key="15">
    <citation type="journal article" date="2002" name="Proc. Natl. Acad. Sci. U.S.A.">
        <title>JLP: a scaffolding protein that tethers JNK/p38MAPK signaling modules and transcription factors.</title>
        <authorList>
            <person name="Lee C.M."/>
            <person name="Onesime D."/>
            <person name="Reddy C.D."/>
            <person name="Dhanasekaran N."/>
            <person name="Reddy E.P."/>
        </authorList>
    </citation>
    <scope>INTERACTION WITH SPAG9</scope>
</reference>
<reference key="16">
    <citation type="journal article" date="2014" name="Mol. Cell. Proteomics">
        <title>Immunoaffinity enrichment and mass spectrometry analysis of protein methylation.</title>
        <authorList>
            <person name="Guo A."/>
            <person name="Gu H."/>
            <person name="Zhou J."/>
            <person name="Mulhern D."/>
            <person name="Wang Y."/>
            <person name="Lee K.A."/>
            <person name="Yang V."/>
            <person name="Aguiar M."/>
            <person name="Kornhauser J."/>
            <person name="Jia X."/>
            <person name="Ren J."/>
            <person name="Beausoleil S.A."/>
            <person name="Silva J.C."/>
            <person name="Vemulapalli V."/>
            <person name="Bedford M.T."/>
            <person name="Comb M.J."/>
        </authorList>
    </citation>
    <scope>METHYLATION [LARGE SCALE ANALYSIS] AT ARG-56</scope>
    <scope>IDENTIFICATION BY MASS SPECTROMETRY [LARGE SCALE ANALYSIS]</scope>
    <source>
        <tissue>Brain</tissue>
        <tissue>Embryo</tissue>
    </source>
</reference>
<gene>
    <name type="primary">Map2k4</name>
    <name type="synonym">Jnkk1</name>
    <name type="synonym">Mek4</name>
    <name type="synonym">Mkk4</name>
    <name type="synonym">Prkmk4</name>
    <name type="synonym">Sek1</name>
    <name type="synonym">Serk1</name>
    <name type="synonym">Skk1</name>
</gene>
<accession>P47809</accession>
<protein>
    <recommendedName>
        <fullName>Dual specificity mitogen-activated protein kinase kinase 4</fullName>
        <shortName>MAP kinase kinase 4</shortName>
        <shortName>MAPKK 4</shortName>
        <ecNumber>2.7.12.2</ecNumber>
    </recommendedName>
    <alternativeName>
        <fullName>C-JUN N-terminal kinase kinase 1</fullName>
        <shortName>JNK kinase 1</shortName>
        <shortName>JNKK 1</shortName>
    </alternativeName>
    <alternativeName>
        <fullName>JNK-activating kinase 1</fullName>
    </alternativeName>
    <alternativeName>
        <fullName>MAPK/ERK kinase 4</fullName>
        <shortName>MEK 4</shortName>
    </alternativeName>
    <alternativeName>
        <fullName>SAPK/ERK kinase 1</fullName>
        <shortName>SEK1</shortName>
    </alternativeName>
</protein>
<keyword id="KW-0007">Acetylation</keyword>
<keyword id="KW-0053">Apoptosis</keyword>
<keyword id="KW-0067">ATP-binding</keyword>
<keyword id="KW-0963">Cytoplasm</keyword>
<keyword id="KW-0418">Kinase</keyword>
<keyword id="KW-0488">Methylation</keyword>
<keyword id="KW-0547">Nucleotide-binding</keyword>
<keyword id="KW-0539">Nucleus</keyword>
<keyword id="KW-0597">Phosphoprotein</keyword>
<keyword id="KW-1185">Reference proteome</keyword>
<keyword id="KW-0723">Serine/threonine-protein kinase</keyword>
<keyword id="KW-0346">Stress response</keyword>
<keyword id="KW-0808">Transferase</keyword>
<keyword id="KW-0829">Tyrosine-protein kinase</keyword>
<comment type="function">
    <text evidence="7 8 11 12 13">Dual specificity protein kinase which acts as an essential component of the MAP kinase signal transduction pathway. Essential component of the stress-activated protein kinase/c-Jun N-terminal kinase (SAP/JNK) signaling pathway. With MAP2K7/MKK7, is the one of the only known kinase to directly activate the stress-activated protein kinase/c-Jun N-terminal kinases MAPK8/JNK1, MAPK9/JNK2 and MAPK10/JNK3. MAP2K4/MKK4 and MAP2K7/MKK7 both activate the JNKs by phosphorylation, but they differ in their preference for the phosphorylation site in the Thr-Pro-Tyr motif. MAP2K4 shows preference for phosphorylation of the Tyr residue and MAP2K7/MKK7 for the Thr residue. The phosphorylation of the Thr residue by MAP2K7/MKK7 seems to be the prerequisite for JNK activation at least in response to pro-inflammatory cytokines, while other stimuli activate both MAP2K4/MKK4 and MAP2K7/MKK7 which synergistically phosphorylate JNKs. MAP2K4 is required for maintaining peripheral lymphoid homeostasis. The MKK/JNK signaling pathway is also involved in mitochondrial death signaling pathway, including the release cytochrome c, leading to apoptosis. Whereas MAP2K7/MKK7 exclusively activates JNKs, MAP2K4/MKK4 additionally activates the p38 MAPKs MAPK11, MAPK12, MAPK13 and MAPK14.</text>
</comment>
<comment type="catalytic activity">
    <reaction>
        <text>L-seryl-[protein] + ATP = O-phospho-L-seryl-[protein] + ADP + H(+)</text>
        <dbReference type="Rhea" id="RHEA:17989"/>
        <dbReference type="Rhea" id="RHEA-COMP:9863"/>
        <dbReference type="Rhea" id="RHEA-COMP:11604"/>
        <dbReference type="ChEBI" id="CHEBI:15378"/>
        <dbReference type="ChEBI" id="CHEBI:29999"/>
        <dbReference type="ChEBI" id="CHEBI:30616"/>
        <dbReference type="ChEBI" id="CHEBI:83421"/>
        <dbReference type="ChEBI" id="CHEBI:456216"/>
        <dbReference type="EC" id="2.7.12.2"/>
    </reaction>
</comment>
<comment type="catalytic activity">
    <reaction>
        <text>L-threonyl-[protein] + ATP = O-phospho-L-threonyl-[protein] + ADP + H(+)</text>
        <dbReference type="Rhea" id="RHEA:46608"/>
        <dbReference type="Rhea" id="RHEA-COMP:11060"/>
        <dbReference type="Rhea" id="RHEA-COMP:11605"/>
        <dbReference type="ChEBI" id="CHEBI:15378"/>
        <dbReference type="ChEBI" id="CHEBI:30013"/>
        <dbReference type="ChEBI" id="CHEBI:30616"/>
        <dbReference type="ChEBI" id="CHEBI:61977"/>
        <dbReference type="ChEBI" id="CHEBI:456216"/>
        <dbReference type="EC" id="2.7.12.2"/>
    </reaction>
</comment>
<comment type="catalytic activity">
    <reaction>
        <text>L-tyrosyl-[protein] + ATP = O-phospho-L-tyrosyl-[protein] + ADP + H(+)</text>
        <dbReference type="Rhea" id="RHEA:10596"/>
        <dbReference type="Rhea" id="RHEA-COMP:10136"/>
        <dbReference type="Rhea" id="RHEA-COMP:20101"/>
        <dbReference type="ChEBI" id="CHEBI:15378"/>
        <dbReference type="ChEBI" id="CHEBI:30616"/>
        <dbReference type="ChEBI" id="CHEBI:46858"/>
        <dbReference type="ChEBI" id="CHEBI:61978"/>
        <dbReference type="ChEBI" id="CHEBI:456216"/>
        <dbReference type="EC" id="2.7.12.2"/>
    </reaction>
</comment>
<comment type="activity regulation">
    <text evidence="13">Activated in response to a variety of cellular stresses, including UV and gamma-irradiation, heat shock, hyperosmolarity, T-cell receptor stimulation, peroxide and inflammatory cytokines. Also activated by developmental cues. MAP2K4/MKK4 is activated by the majority of MKKKs, such as MAP3K5/ASK1, MAP3K1/MEKK1, MAP3K7/TAK1, MAP3K10/MLK2, MAP3K11/MLK3, MAP3K12/DLK and MAP3K13/LZK.</text>
</comment>
<comment type="subunit">
    <text evidence="1">Interacts with SPAG9. Interacts (via its D domain) with its substrates MAPK8/JNK1, MAPK9/JNK2, MAPK10/JNK3, MAPK11 and MAPK14 (By similarity). Interacts (via its DVD domain) with MAP3Ks activators like MAP3K1/MEKK1 and MAP3K11/MLK3. Interacts with ARRB1, ARRB2 and MAPK8IP3/JIP3 (By similarity).</text>
</comment>
<comment type="interaction">
    <interactant intactId="EBI-447934">
        <id>P47809</id>
    </interactant>
    <interactant intactId="EBI-447913">
        <id>P53349</id>
        <label>Map3k1</label>
    </interactant>
    <organismsDiffer>false</organismsDiffer>
    <experiments>2</experiments>
</comment>
<comment type="interaction">
    <interactant intactId="EBI-447934">
        <id>P47809</id>
    </interactant>
    <interactant intactId="EBI-9549291">
        <id>Q9ESN9-2</id>
        <label>Mapk8ip3</label>
    </interactant>
    <organismsDiffer>false</organismsDiffer>
    <experiments>3</experiments>
</comment>
<comment type="subcellular location">
    <subcellularLocation>
        <location evidence="13">Cytoplasm</location>
    </subcellularLocation>
    <subcellularLocation>
        <location evidence="13">Nucleus</location>
    </subcellularLocation>
</comment>
<comment type="tissue specificity">
    <text evidence="6">Strong expression is detected in most of the central nervous system and in liver and thymus during early stages of development. While expression in nervous system increases over time, expression in fetal liver and thymus gradually decreases as embryogenesis proceeds. High level of expression in the central nervous system persists throughout postnatal development and remained at a stable level in adult brain.</text>
</comment>
<comment type="domain">
    <text evidence="1">The DVD domain (residues 362-385) contains a conserved docking site and is found in the mammalian MAP kinase kinases (MAP2Ks). The DVD sites bind to their specific upstream MAP kinase kinase kinases (MAP3Ks) and are essential for activation (By similarity).</text>
</comment>
<comment type="domain">
    <text>The D domain (residues 35-50) contains a conserved docking site and is required for the binding to MAPk substrates.</text>
</comment>
<comment type="PTM">
    <text evidence="1">Activated by phosphorylation on Ser-255 and Thr-259 by MAP kinase kinase kinases (MAP3Ks).</text>
</comment>
<comment type="disruption phenotype">
    <text evidence="9 10">Causes irregular alignment of Purkinje cells in the cerebellum and delayed radial migration in the cortex during brain development. The cardiac-specific deletion prevents pathological cardiac hypertrophy.</text>
</comment>
<comment type="similarity">
    <text evidence="14">Belongs to the protein kinase superfamily. STE Ser/Thr protein kinase family. MAP kinase kinase subfamily.</text>
</comment>
<evidence type="ECO:0000250" key="1"/>
<evidence type="ECO:0000250" key="2">
    <source>
        <dbReference type="UniProtKB" id="P45985"/>
    </source>
</evidence>
<evidence type="ECO:0000255" key="3">
    <source>
        <dbReference type="PROSITE-ProRule" id="PRU00159"/>
    </source>
</evidence>
<evidence type="ECO:0000255" key="4">
    <source>
        <dbReference type="PROSITE-ProRule" id="PRU10027"/>
    </source>
</evidence>
<evidence type="ECO:0000256" key="5">
    <source>
        <dbReference type="SAM" id="MobiDB-lite"/>
    </source>
</evidence>
<evidence type="ECO:0000269" key="6">
    <source>
    </source>
</evidence>
<evidence type="ECO:0000269" key="7">
    <source>
    </source>
</evidence>
<evidence type="ECO:0000269" key="8">
    <source>
    </source>
</evidence>
<evidence type="ECO:0000269" key="9">
    <source>
    </source>
</evidence>
<evidence type="ECO:0000269" key="10">
    <source>
    </source>
</evidence>
<evidence type="ECO:0000269" key="11">
    <source>
    </source>
</evidence>
<evidence type="ECO:0000269" key="12">
    <source>
    </source>
</evidence>
<evidence type="ECO:0000269" key="13">
    <source>
    </source>
</evidence>
<evidence type="ECO:0000305" key="14"/>
<evidence type="ECO:0007744" key="15">
    <source>
    </source>
</evidence>
<evidence type="ECO:0007744" key="16">
    <source>
    </source>
</evidence>
<feature type="initiator methionine" description="Removed" evidence="2">
    <location>
        <position position="1"/>
    </location>
</feature>
<feature type="chain" id="PRO_0000086382" description="Dual specificity mitogen-activated protein kinase kinase 4">
    <location>
        <begin position="2"/>
        <end position="397"/>
    </location>
</feature>
<feature type="domain" description="Protein kinase" evidence="3">
    <location>
        <begin position="100"/>
        <end position="366"/>
    </location>
</feature>
<feature type="region of interest" description="Disordered" evidence="5">
    <location>
        <begin position="1"/>
        <end position="38"/>
    </location>
</feature>
<feature type="region of interest" description="D domain" evidence="1">
    <location>
        <begin position="35"/>
        <end position="50"/>
    </location>
</feature>
<feature type="region of interest" description="DVD domain" evidence="1">
    <location>
        <begin position="362"/>
        <end position="385"/>
    </location>
</feature>
<feature type="compositionally biased region" description="Gly residues" evidence="5">
    <location>
        <begin position="7"/>
        <end position="20"/>
    </location>
</feature>
<feature type="active site" description="Proton acceptor" evidence="3 4">
    <location>
        <position position="227"/>
    </location>
</feature>
<feature type="binding site" evidence="3">
    <location>
        <begin position="106"/>
        <end position="114"/>
    </location>
    <ligand>
        <name>ATP</name>
        <dbReference type="ChEBI" id="CHEBI:30616"/>
    </ligand>
</feature>
<feature type="binding site">
    <location>
        <position position="129"/>
    </location>
    <ligand>
        <name>ATP</name>
        <dbReference type="ChEBI" id="CHEBI:30616"/>
    </ligand>
</feature>
<feature type="modified residue" description="N-acetylalanine" evidence="2">
    <location>
        <position position="2"/>
    </location>
</feature>
<feature type="modified residue" description="Asymmetric dimethylarginine; alternate" evidence="16">
    <location>
        <position position="56"/>
    </location>
</feature>
<feature type="modified residue" description="Omega-N-methylarginine; alternate" evidence="2">
    <location>
        <position position="56"/>
    </location>
</feature>
<feature type="modified residue" description="Phosphoserine" evidence="15">
    <location>
        <position position="88"/>
    </location>
</feature>
<feature type="modified residue" description="Phosphoserine" evidence="15">
    <location>
        <position position="255"/>
    </location>
</feature>
<feature type="modified residue" description="Phosphothreonine" evidence="15">
    <location>
        <position position="259"/>
    </location>
</feature>
<feature type="mutagenesis site" description="Loss of ATP-binding." evidence="11">
    <original>K</original>
    <variation>R</variation>
    <location>
        <position position="129"/>
    </location>
</feature>
<proteinExistence type="evidence at protein level"/>
<dbReference type="EC" id="2.7.12.2"/>
<dbReference type="EMBL" id="U18310">
    <property type="protein sequence ID" value="AAB81554.1"/>
    <property type="molecule type" value="mRNA"/>
</dbReference>
<dbReference type="CCDS" id="CCDS24844.1"/>
<dbReference type="PIR" id="S52423">
    <property type="entry name" value="S52423"/>
</dbReference>
<dbReference type="RefSeq" id="NP_033183.1">
    <property type="nucleotide sequence ID" value="NM_009157.5"/>
</dbReference>
<dbReference type="SMR" id="P47809"/>
<dbReference type="BioGRID" id="204952">
    <property type="interactions" value="20"/>
</dbReference>
<dbReference type="CORUM" id="P47809"/>
<dbReference type="DIP" id="DIP-869N"/>
<dbReference type="FunCoup" id="P47809">
    <property type="interactions" value="2678"/>
</dbReference>
<dbReference type="IntAct" id="P47809">
    <property type="interactions" value="4"/>
</dbReference>
<dbReference type="STRING" id="10090.ENSMUSP00000041282"/>
<dbReference type="BindingDB" id="P47809"/>
<dbReference type="ChEMBL" id="CHEMBL2201"/>
<dbReference type="DrugCentral" id="P47809"/>
<dbReference type="GlyGen" id="P47809">
    <property type="glycosylation" value="4 sites, 1 N-linked glycan (1 site), 1 O-linked glycan (1 site)"/>
</dbReference>
<dbReference type="iPTMnet" id="P47809"/>
<dbReference type="PhosphoSitePlus" id="P47809"/>
<dbReference type="SwissPalm" id="P47809"/>
<dbReference type="jPOST" id="P47809"/>
<dbReference type="PaxDb" id="10090-ENSMUSP00000041282"/>
<dbReference type="PeptideAtlas" id="P47809"/>
<dbReference type="ProteomicsDB" id="295582"/>
<dbReference type="Pumba" id="P47809"/>
<dbReference type="Antibodypedia" id="3571">
    <property type="antibodies" value="1421 antibodies from 42 providers"/>
</dbReference>
<dbReference type="DNASU" id="26398"/>
<dbReference type="Ensembl" id="ENSMUST00000046963.10">
    <property type="protein sequence ID" value="ENSMUSP00000041282.4"/>
    <property type="gene ID" value="ENSMUSG00000033352.12"/>
</dbReference>
<dbReference type="GeneID" id="26398"/>
<dbReference type="KEGG" id="mmu:26398"/>
<dbReference type="UCSC" id="uc007jlb.1">
    <property type="organism name" value="mouse"/>
</dbReference>
<dbReference type="AGR" id="MGI:1346869"/>
<dbReference type="CTD" id="6416"/>
<dbReference type="MGI" id="MGI:1346869">
    <property type="gene designation" value="Map2k4"/>
</dbReference>
<dbReference type="VEuPathDB" id="HostDB:ENSMUSG00000033352"/>
<dbReference type="eggNOG" id="KOG1006">
    <property type="taxonomic scope" value="Eukaryota"/>
</dbReference>
<dbReference type="GeneTree" id="ENSGT00940000154744"/>
<dbReference type="HOGENOM" id="CLU_000288_63_23_1"/>
<dbReference type="InParanoid" id="P47809"/>
<dbReference type="OMA" id="HILLEFC"/>
<dbReference type="OrthoDB" id="10252354at2759"/>
<dbReference type="PhylomeDB" id="P47809"/>
<dbReference type="TreeFam" id="TF350701"/>
<dbReference type="BRENDA" id="2.7.12.2">
    <property type="organism ID" value="3474"/>
</dbReference>
<dbReference type="Reactome" id="R-MMU-2559580">
    <property type="pathway name" value="Oxidative Stress Induced Senescence"/>
</dbReference>
<dbReference type="Reactome" id="R-MMU-2871796">
    <property type="pathway name" value="FCERI mediated MAPK activation"/>
</dbReference>
<dbReference type="Reactome" id="R-MMU-450321">
    <property type="pathway name" value="JNK (c-Jun kinases) phosphorylation and activation mediated by activated human TAK1"/>
</dbReference>
<dbReference type="BioGRID-ORCS" id="26398">
    <property type="hits" value="7 hits in 79 CRISPR screens"/>
</dbReference>
<dbReference type="ChiTaRS" id="Map2k4">
    <property type="organism name" value="mouse"/>
</dbReference>
<dbReference type="PRO" id="PR:P47809"/>
<dbReference type="Proteomes" id="UP000000589">
    <property type="component" value="Chromosome 11"/>
</dbReference>
<dbReference type="RNAct" id="P47809">
    <property type="molecule type" value="protein"/>
</dbReference>
<dbReference type="Bgee" id="ENSMUSG00000033352">
    <property type="expression patterns" value="Expressed in dentate gyrus of hippocampal formation granule cell and 287 other cell types or tissues"/>
</dbReference>
<dbReference type="ExpressionAtlas" id="P47809">
    <property type="expression patterns" value="baseline and differential"/>
</dbReference>
<dbReference type="GO" id="GO:0005829">
    <property type="term" value="C:cytosol"/>
    <property type="evidence" value="ECO:0000304"/>
    <property type="project" value="Reactome"/>
</dbReference>
<dbReference type="GO" id="GO:0005634">
    <property type="term" value="C:nucleus"/>
    <property type="evidence" value="ECO:0007669"/>
    <property type="project" value="UniProtKB-SubCell"/>
</dbReference>
<dbReference type="GO" id="GO:0005524">
    <property type="term" value="F:ATP binding"/>
    <property type="evidence" value="ECO:0007669"/>
    <property type="project" value="UniProtKB-KW"/>
</dbReference>
<dbReference type="GO" id="GO:0004708">
    <property type="term" value="F:MAP kinase kinase activity"/>
    <property type="evidence" value="ECO:0007669"/>
    <property type="project" value="UniProtKB-EC"/>
</dbReference>
<dbReference type="GO" id="GO:0106310">
    <property type="term" value="F:protein serine kinase activity"/>
    <property type="evidence" value="ECO:0007669"/>
    <property type="project" value="RHEA"/>
</dbReference>
<dbReference type="GO" id="GO:0004674">
    <property type="term" value="F:protein serine/threonine kinase activity"/>
    <property type="evidence" value="ECO:0007669"/>
    <property type="project" value="UniProtKB-KW"/>
</dbReference>
<dbReference type="GO" id="GO:0004713">
    <property type="term" value="F:protein tyrosine kinase activity"/>
    <property type="evidence" value="ECO:0007669"/>
    <property type="project" value="UniProtKB-KW"/>
</dbReference>
<dbReference type="GO" id="GO:0071260">
    <property type="term" value="P:cellular response to mechanical stimulus"/>
    <property type="evidence" value="ECO:0007669"/>
    <property type="project" value="Ensembl"/>
</dbReference>
<dbReference type="GO" id="GO:0036481">
    <property type="term" value="P:intrinsic apoptotic signaling pathway in response to hydrogen peroxide"/>
    <property type="evidence" value="ECO:0000314"/>
    <property type="project" value="BHF-UCL"/>
</dbReference>
<dbReference type="GO" id="GO:0000165">
    <property type="term" value="P:MAPK cascade"/>
    <property type="evidence" value="ECO:0000353"/>
    <property type="project" value="MGI"/>
</dbReference>
<dbReference type="GO" id="GO:2000672">
    <property type="term" value="P:negative regulation of motor neuron apoptotic process"/>
    <property type="evidence" value="ECO:0000315"/>
    <property type="project" value="MGI"/>
</dbReference>
<dbReference type="GO" id="GO:0009611">
    <property type="term" value="P:response to wounding"/>
    <property type="evidence" value="ECO:0000315"/>
    <property type="project" value="MGI"/>
</dbReference>
<dbReference type="GO" id="GO:0034390">
    <property type="term" value="P:smooth muscle cell apoptotic process"/>
    <property type="evidence" value="ECO:0000314"/>
    <property type="project" value="BHF-UCL"/>
</dbReference>
<dbReference type="CDD" id="cd06616">
    <property type="entry name" value="PKc_MKK4"/>
    <property type="match status" value="1"/>
</dbReference>
<dbReference type="FunFam" id="1.10.510.10:FF:000090">
    <property type="entry name" value="Dual specificity mitogen-activated protein kinase kinase 4"/>
    <property type="match status" value="1"/>
</dbReference>
<dbReference type="FunFam" id="3.30.200.20:FF:000126">
    <property type="entry name" value="Dual specificity mitogen-activated protein kinase kinase 4"/>
    <property type="match status" value="1"/>
</dbReference>
<dbReference type="Gene3D" id="3.30.200.20">
    <property type="entry name" value="Phosphorylase Kinase, domain 1"/>
    <property type="match status" value="1"/>
</dbReference>
<dbReference type="Gene3D" id="1.10.510.10">
    <property type="entry name" value="Transferase(Phosphotransferase) domain 1"/>
    <property type="match status" value="1"/>
</dbReference>
<dbReference type="InterPro" id="IPR011009">
    <property type="entry name" value="Kinase-like_dom_sf"/>
</dbReference>
<dbReference type="InterPro" id="IPR000719">
    <property type="entry name" value="Prot_kinase_dom"/>
</dbReference>
<dbReference type="InterPro" id="IPR017441">
    <property type="entry name" value="Protein_kinase_ATP_BS"/>
</dbReference>
<dbReference type="InterPro" id="IPR008271">
    <property type="entry name" value="Ser/Thr_kinase_AS"/>
</dbReference>
<dbReference type="PANTHER" id="PTHR48013:SF15">
    <property type="entry name" value="DUAL SPECIFICITY MITOGEN-ACTIVATED PROTEIN KINASE KINASE 4"/>
    <property type="match status" value="1"/>
</dbReference>
<dbReference type="PANTHER" id="PTHR48013">
    <property type="entry name" value="DUAL SPECIFICITY MITOGEN-ACTIVATED PROTEIN KINASE KINASE 5-RELATED"/>
    <property type="match status" value="1"/>
</dbReference>
<dbReference type="Pfam" id="PF00069">
    <property type="entry name" value="Pkinase"/>
    <property type="match status" value="1"/>
</dbReference>
<dbReference type="SMART" id="SM00220">
    <property type="entry name" value="S_TKc"/>
    <property type="match status" value="1"/>
</dbReference>
<dbReference type="SUPFAM" id="SSF56112">
    <property type="entry name" value="Protein kinase-like (PK-like)"/>
    <property type="match status" value="1"/>
</dbReference>
<dbReference type="PROSITE" id="PS00107">
    <property type="entry name" value="PROTEIN_KINASE_ATP"/>
    <property type="match status" value="1"/>
</dbReference>
<dbReference type="PROSITE" id="PS50011">
    <property type="entry name" value="PROTEIN_KINASE_DOM"/>
    <property type="match status" value="1"/>
</dbReference>
<dbReference type="PROSITE" id="PS00108">
    <property type="entry name" value="PROTEIN_KINASE_ST"/>
    <property type="match status" value="1"/>
</dbReference>
<name>MP2K4_MOUSE</name>
<sequence length="397" mass="44114">MAAPSPSGGGGSGGGGGTPGPIGPPASGHPAVSSMQGKRKALKLNFANPPVKSTARFTLNPNTTGVQNPHIERLRTHSIESSGKLKISPEQHWDFTAEDLKDLGEIGRGAYGSVNKMVHKPSGQIMAVKRIRSTVDEKEQKQLLMDLDVVMRSSDCPYIVQFYGALFREGDCWICMELMSTSFDKFYKYVYSVLDDVIPEEILGKITLATVKALNHLKENLKIIHRDIKPSNILLDRSGNIKLCDFGISGQLVDSIAKTRDAGCRPYMAPERIDPSASRQGYDVRSDVWSLGITLYELATGRFPYPKWNSVFDQLTQVVKGDPPQLSNSEEREFSPSFINFVNLCLTKDESKRPKYKELLKHPFILMYEERTVEVACYVCKILDQMPATPSSPMYVD</sequence>